<dbReference type="EMBL" id="CP000901">
    <property type="protein sequence ID" value="ABX86336.1"/>
    <property type="molecule type" value="Genomic_DNA"/>
</dbReference>
<dbReference type="RefSeq" id="WP_002208527.1">
    <property type="nucleotide sequence ID" value="NZ_CP009935.1"/>
</dbReference>
<dbReference type="KEGG" id="ypg:YpAngola_A2785"/>
<dbReference type="PATRIC" id="fig|349746.12.peg.3819"/>
<dbReference type="CDD" id="cd18720">
    <property type="entry name" value="PIN_YqxD-like"/>
    <property type="match status" value="1"/>
</dbReference>
<dbReference type="HAMAP" id="MF_00489">
    <property type="entry name" value="UPF0178"/>
    <property type="match status" value="1"/>
</dbReference>
<dbReference type="InterPro" id="IPR003791">
    <property type="entry name" value="UPF0178"/>
</dbReference>
<dbReference type="NCBIfam" id="NF001095">
    <property type="entry name" value="PRK00124.1"/>
    <property type="match status" value="1"/>
</dbReference>
<dbReference type="PANTHER" id="PTHR35146">
    <property type="entry name" value="UPF0178 PROTEIN YAII"/>
    <property type="match status" value="1"/>
</dbReference>
<dbReference type="PANTHER" id="PTHR35146:SF1">
    <property type="entry name" value="UPF0178 PROTEIN YAII"/>
    <property type="match status" value="1"/>
</dbReference>
<dbReference type="Pfam" id="PF02639">
    <property type="entry name" value="DUF188"/>
    <property type="match status" value="1"/>
</dbReference>
<reference key="1">
    <citation type="journal article" date="2010" name="J. Bacteriol.">
        <title>Genome sequence of the deep-rooted Yersinia pestis strain Angola reveals new insights into the evolution and pangenome of the plague bacterium.</title>
        <authorList>
            <person name="Eppinger M."/>
            <person name="Worsham P.L."/>
            <person name="Nikolich M.P."/>
            <person name="Riley D.R."/>
            <person name="Sebastian Y."/>
            <person name="Mou S."/>
            <person name="Achtman M."/>
            <person name="Lindler L.E."/>
            <person name="Ravel J."/>
        </authorList>
    </citation>
    <scope>NUCLEOTIDE SEQUENCE [LARGE SCALE GENOMIC DNA]</scope>
    <source>
        <strain>Angola</strain>
    </source>
</reference>
<gene>
    <name type="ordered locus">YpAngola_A2785</name>
</gene>
<evidence type="ECO:0000255" key="1">
    <source>
        <dbReference type="HAMAP-Rule" id="MF_00489"/>
    </source>
</evidence>
<organism>
    <name type="scientific">Yersinia pestis bv. Antiqua (strain Angola)</name>
    <dbReference type="NCBI Taxonomy" id="349746"/>
    <lineage>
        <taxon>Bacteria</taxon>
        <taxon>Pseudomonadati</taxon>
        <taxon>Pseudomonadota</taxon>
        <taxon>Gammaproteobacteria</taxon>
        <taxon>Enterobacterales</taxon>
        <taxon>Yersiniaceae</taxon>
        <taxon>Yersinia</taxon>
    </lineage>
</organism>
<sequence>MQIWVDADACPNVIKEVLFRAADRTGMMVTLVANQPLKTPPSKFIRTVQVASGFDVADNEIVQRVEKNDLVITADIPLAAEVIEKGGIALNPRGERYTPDTIRERLNMRDFMDTMRASGIQTGGPNTLNQRDRQQFANELDKWLQQARNQAK</sequence>
<accession>A9QZK7</accession>
<proteinExistence type="inferred from homology"/>
<feature type="chain" id="PRO_1000126220" description="UPF0178 protein YpAngola_A2785">
    <location>
        <begin position="1"/>
        <end position="152"/>
    </location>
</feature>
<protein>
    <recommendedName>
        <fullName evidence="1">UPF0178 protein YpAngola_A2785</fullName>
    </recommendedName>
</protein>
<comment type="similarity">
    <text evidence="1">Belongs to the UPF0178 family.</text>
</comment>
<name>Y2785_YERPG</name>